<name>SCIN_BOVIN</name>
<proteinExistence type="evidence at protein level"/>
<dbReference type="EMBL" id="D26549">
    <property type="protein sequence ID" value="BAA05548.1"/>
    <property type="molecule type" value="mRNA"/>
</dbReference>
<dbReference type="EMBL" id="X78479">
    <property type="protein sequence ID" value="CAA55227.1"/>
    <property type="molecule type" value="mRNA"/>
</dbReference>
<dbReference type="PIR" id="A53209">
    <property type="entry name" value="A53209"/>
</dbReference>
<dbReference type="PIR" id="I45832">
    <property type="entry name" value="I45832"/>
</dbReference>
<dbReference type="RefSeq" id="NP_776602.1">
    <property type="nucleotide sequence ID" value="NM_174177.2"/>
</dbReference>
<dbReference type="SMR" id="Q28046"/>
<dbReference type="FunCoup" id="Q28046">
    <property type="interactions" value="300"/>
</dbReference>
<dbReference type="STRING" id="9913.ENSBTAP00000012910"/>
<dbReference type="PaxDb" id="9913-ENSBTAP00000012910"/>
<dbReference type="PeptideAtlas" id="Q28046"/>
<dbReference type="GeneID" id="281478"/>
<dbReference type="KEGG" id="bta:281478"/>
<dbReference type="CTD" id="85477"/>
<dbReference type="eggNOG" id="KOG0443">
    <property type="taxonomic scope" value="Eukaryota"/>
</dbReference>
<dbReference type="InParanoid" id="Q28046"/>
<dbReference type="OrthoDB" id="6375767at2759"/>
<dbReference type="Proteomes" id="UP000009136">
    <property type="component" value="Unplaced"/>
</dbReference>
<dbReference type="GO" id="GO:0015629">
    <property type="term" value="C:actin cytoskeleton"/>
    <property type="evidence" value="ECO:0000318"/>
    <property type="project" value="GO_Central"/>
</dbReference>
<dbReference type="GO" id="GO:0070161">
    <property type="term" value="C:anchoring junction"/>
    <property type="evidence" value="ECO:0007669"/>
    <property type="project" value="UniProtKB-KW"/>
</dbReference>
<dbReference type="GO" id="GO:0005938">
    <property type="term" value="C:cell cortex"/>
    <property type="evidence" value="ECO:0000314"/>
    <property type="project" value="UniProtKB"/>
</dbReference>
<dbReference type="GO" id="GO:0042995">
    <property type="term" value="C:cell projection"/>
    <property type="evidence" value="ECO:0007669"/>
    <property type="project" value="UniProtKB-KW"/>
</dbReference>
<dbReference type="GO" id="GO:0005737">
    <property type="term" value="C:cytoplasm"/>
    <property type="evidence" value="ECO:0000314"/>
    <property type="project" value="UniProtKB"/>
</dbReference>
<dbReference type="GO" id="GO:0002102">
    <property type="term" value="C:podosome"/>
    <property type="evidence" value="ECO:0007669"/>
    <property type="project" value="UniProtKB-SubCell"/>
</dbReference>
<dbReference type="GO" id="GO:0003779">
    <property type="term" value="F:actin binding"/>
    <property type="evidence" value="ECO:0000314"/>
    <property type="project" value="UniProtKB"/>
</dbReference>
<dbReference type="GO" id="GO:0051015">
    <property type="term" value="F:actin filament binding"/>
    <property type="evidence" value="ECO:0000314"/>
    <property type="project" value="UniProtKB"/>
</dbReference>
<dbReference type="GO" id="GO:0005509">
    <property type="term" value="F:calcium ion binding"/>
    <property type="evidence" value="ECO:0000314"/>
    <property type="project" value="UniProtKB"/>
</dbReference>
<dbReference type="GO" id="GO:0005546">
    <property type="term" value="F:phosphatidylinositol-4,5-bisphosphate binding"/>
    <property type="evidence" value="ECO:0000314"/>
    <property type="project" value="UniProtKB"/>
</dbReference>
<dbReference type="GO" id="GO:0001786">
    <property type="term" value="F:phosphatidylserine binding"/>
    <property type="evidence" value="ECO:0000314"/>
    <property type="project" value="UniProtKB"/>
</dbReference>
<dbReference type="GO" id="GO:0051014">
    <property type="term" value="P:actin filament severing"/>
    <property type="evidence" value="ECO:0000314"/>
    <property type="project" value="UniProtKB"/>
</dbReference>
<dbReference type="GO" id="GO:0045010">
    <property type="term" value="P:actin nucleation"/>
    <property type="evidence" value="ECO:0000314"/>
    <property type="project" value="UniProtKB"/>
</dbReference>
<dbReference type="GO" id="GO:0008154">
    <property type="term" value="P:actin polymerization or depolymerization"/>
    <property type="evidence" value="ECO:0000318"/>
    <property type="project" value="GO_Central"/>
</dbReference>
<dbReference type="GO" id="GO:0051016">
    <property type="term" value="P:barbed-end actin filament capping"/>
    <property type="evidence" value="ECO:0000318"/>
    <property type="project" value="GO_Central"/>
</dbReference>
<dbReference type="GO" id="GO:0017156">
    <property type="term" value="P:calcium-ion regulated exocytosis"/>
    <property type="evidence" value="ECO:0000314"/>
    <property type="project" value="UniProtKB"/>
</dbReference>
<dbReference type="GO" id="GO:0030031">
    <property type="term" value="P:cell projection assembly"/>
    <property type="evidence" value="ECO:0000318"/>
    <property type="project" value="GO_Central"/>
</dbReference>
<dbReference type="GO" id="GO:0007417">
    <property type="term" value="P:central nervous system development"/>
    <property type="evidence" value="ECO:0000318"/>
    <property type="project" value="GO_Central"/>
</dbReference>
<dbReference type="GO" id="GO:0008285">
    <property type="term" value="P:negative regulation of cell population proliferation"/>
    <property type="evidence" value="ECO:0000250"/>
    <property type="project" value="UniProtKB"/>
</dbReference>
<dbReference type="GO" id="GO:0043065">
    <property type="term" value="P:positive regulation of apoptotic process"/>
    <property type="evidence" value="ECO:0000250"/>
    <property type="project" value="UniProtKB"/>
</dbReference>
<dbReference type="GO" id="GO:0045654">
    <property type="term" value="P:positive regulation of megakaryocyte differentiation"/>
    <property type="evidence" value="ECO:0000250"/>
    <property type="project" value="UniProtKB"/>
</dbReference>
<dbReference type="GO" id="GO:0051047">
    <property type="term" value="P:positive regulation of secretion"/>
    <property type="evidence" value="ECO:0000314"/>
    <property type="project" value="UniProtKB"/>
</dbReference>
<dbReference type="GO" id="GO:0032330">
    <property type="term" value="P:regulation of chondrocyte differentiation"/>
    <property type="evidence" value="ECO:0000250"/>
    <property type="project" value="UniProtKB"/>
</dbReference>
<dbReference type="CDD" id="cd11290">
    <property type="entry name" value="gelsolin_S1_like"/>
    <property type="match status" value="1"/>
</dbReference>
<dbReference type="CDD" id="cd11289">
    <property type="entry name" value="gelsolin_S2_like"/>
    <property type="match status" value="1"/>
</dbReference>
<dbReference type="CDD" id="cd11292">
    <property type="entry name" value="gelsolin_S3_like"/>
    <property type="match status" value="1"/>
</dbReference>
<dbReference type="CDD" id="cd11293">
    <property type="entry name" value="gelsolin_S4_like"/>
    <property type="match status" value="1"/>
</dbReference>
<dbReference type="CDD" id="cd11288">
    <property type="entry name" value="gelsolin_S5_like"/>
    <property type="match status" value="1"/>
</dbReference>
<dbReference type="CDD" id="cd11291">
    <property type="entry name" value="gelsolin_S6_like"/>
    <property type="match status" value="1"/>
</dbReference>
<dbReference type="FunFam" id="3.40.20.10:FF:000001">
    <property type="entry name" value="Gelsolin"/>
    <property type="match status" value="1"/>
</dbReference>
<dbReference type="FunFam" id="3.40.20.10:FF:000002">
    <property type="entry name" value="Gelsolin"/>
    <property type="match status" value="1"/>
</dbReference>
<dbReference type="FunFam" id="3.40.20.10:FF:000004">
    <property type="entry name" value="Gelsolin"/>
    <property type="match status" value="1"/>
</dbReference>
<dbReference type="FunFam" id="3.40.20.10:FF:000005">
    <property type="entry name" value="Gelsolin"/>
    <property type="match status" value="1"/>
</dbReference>
<dbReference type="FunFam" id="3.40.20.10:FF:000009">
    <property type="entry name" value="gelsolin isoform X1"/>
    <property type="match status" value="1"/>
</dbReference>
<dbReference type="FunFam" id="3.40.20.10:FF:000008">
    <property type="entry name" value="gelsolin isoform X2"/>
    <property type="match status" value="1"/>
</dbReference>
<dbReference type="Gene3D" id="3.40.20.10">
    <property type="entry name" value="Severin"/>
    <property type="match status" value="6"/>
</dbReference>
<dbReference type="InterPro" id="IPR029006">
    <property type="entry name" value="ADF-H/Gelsolin-like_dom_sf"/>
</dbReference>
<dbReference type="InterPro" id="IPR007123">
    <property type="entry name" value="Gelsolin-like_dom"/>
</dbReference>
<dbReference type="InterPro" id="IPR036180">
    <property type="entry name" value="Gelsolin-like_dom_sf"/>
</dbReference>
<dbReference type="InterPro" id="IPR007122">
    <property type="entry name" value="Villin/Gelsolin"/>
</dbReference>
<dbReference type="PANTHER" id="PTHR11977:SF78">
    <property type="entry name" value="SCINDERIN"/>
    <property type="match status" value="1"/>
</dbReference>
<dbReference type="PANTHER" id="PTHR11977">
    <property type="entry name" value="VILLIN"/>
    <property type="match status" value="1"/>
</dbReference>
<dbReference type="Pfam" id="PF00626">
    <property type="entry name" value="Gelsolin"/>
    <property type="match status" value="6"/>
</dbReference>
<dbReference type="PRINTS" id="PR00597">
    <property type="entry name" value="GELSOLIN"/>
</dbReference>
<dbReference type="SMART" id="SM00262">
    <property type="entry name" value="GEL"/>
    <property type="match status" value="6"/>
</dbReference>
<dbReference type="SUPFAM" id="SSF55753">
    <property type="entry name" value="Actin depolymerizing proteins"/>
    <property type="match status" value="5"/>
</dbReference>
<dbReference type="SUPFAM" id="SSF82754">
    <property type="entry name" value="C-terminal, gelsolin-like domain of Sec23/24"/>
    <property type="match status" value="1"/>
</dbReference>
<organism>
    <name type="scientific">Bos taurus</name>
    <name type="common">Bovine</name>
    <dbReference type="NCBI Taxonomy" id="9913"/>
    <lineage>
        <taxon>Eukaryota</taxon>
        <taxon>Metazoa</taxon>
        <taxon>Chordata</taxon>
        <taxon>Craniata</taxon>
        <taxon>Vertebrata</taxon>
        <taxon>Euteleostomi</taxon>
        <taxon>Mammalia</taxon>
        <taxon>Eutheria</taxon>
        <taxon>Laurasiatheria</taxon>
        <taxon>Artiodactyla</taxon>
        <taxon>Ruminantia</taxon>
        <taxon>Pecora</taxon>
        <taxon>Bovidae</taxon>
        <taxon>Bovinae</taxon>
        <taxon>Bos</taxon>
    </lineage>
</organism>
<accession>Q28046</accession>
<accession>Q27948</accession>
<sequence length="715" mass="80578">MAQGLYHEEFARAGKRAGLQVWRIEKLELVPVPESAYGNFYVGDAYLVLHTTQASRGFTYRLHFWLGKECTQDESTAAAIFTVQMDDYLGGKPVQNRELQGYESTDFVGYFKGGLKYKAGGVASGLNHVLTNDLTAQRLLHVKGRRVVRATEVPLSWDSFNKGDCFIIDLGTEIYQWCGSSCNKYERLKASQVAIGIRDNERKGRAQLIVVEEGSEPSELTKVLGEKPKLRDGEDDDDIKADITNRKMAKLYMVSDASGSMKVSLVAEENPFSMAMLLSEECFILDHGAAKQIFVWKGKDANPQERKAAMKTAEEFLQQMNYSTNTQIQVLPEGGETPIFKQFFKDWRDRDQSDGFGKVYVTEKVAHVKQIPFDASKLHSSPQMAAQHHVVDDGSGKVQIWRVENNGRVEIDRNSYGEFYGGDCYIILYTYPRGQIIYTWQGANATRDELTTSAFLTVQLDRSLGGQAVQIRVSQGKEPAHLLSLFKDKPLIIYKNGTSKKEGQAPAPPIRLFQVRRNLASITRIMEVDVDANSLNSNDVFVLKLRQNNGYIWIGKGSTQEEEKGAEYVASVLKCKTSTIQEGKEPEEFWNSLGGKKDYQTSPLLESQAEDHPPRLYGCSNKTGRFIIEEVPGEFTQDDLAEDDVMLLDAWEQIFIWIGKDANEVEKSESLKSAKIYLETDPSGRDKRTPIVIIKQGHEPPTFTGWFLGWDSSRW</sequence>
<gene>
    <name evidence="9" type="primary">SCIN</name>
</gene>
<evidence type="ECO:0000250" key="1">
    <source>
        <dbReference type="UniProtKB" id="Q5ZIV9"/>
    </source>
</evidence>
<evidence type="ECO:0000250" key="2">
    <source>
        <dbReference type="UniProtKB" id="Q60604"/>
    </source>
</evidence>
<evidence type="ECO:0000250" key="3">
    <source>
        <dbReference type="UniProtKB" id="Q9Y6U3"/>
    </source>
</evidence>
<evidence type="ECO:0000255" key="4"/>
<evidence type="ECO:0000269" key="5">
    <source>
    </source>
</evidence>
<evidence type="ECO:0000269" key="6">
    <source>
    </source>
</evidence>
<evidence type="ECO:0000269" key="7">
    <source>
    </source>
</evidence>
<evidence type="ECO:0000303" key="8">
    <source>
    </source>
</evidence>
<evidence type="ECO:0000303" key="9">
    <source ref="2"/>
</evidence>
<evidence type="ECO:0000305" key="10"/>
<feature type="chain" id="PRO_0000218743" description="Scinderin">
    <location>
        <begin position="1"/>
        <end position="715"/>
    </location>
</feature>
<feature type="repeat" description="Gelsolin-like 1">
    <location>
        <begin position="27"/>
        <end position="77"/>
    </location>
</feature>
<feature type="repeat" description="Gelsolin-like 2">
    <location>
        <begin position="148"/>
        <end position="188"/>
    </location>
</feature>
<feature type="repeat" description="Gelsolin-like 3">
    <location>
        <begin position="265"/>
        <end position="307"/>
    </location>
</feature>
<feature type="repeat" description="Gelsolin-like 4">
    <location>
        <begin position="398"/>
        <end position="451"/>
    </location>
</feature>
<feature type="repeat" description="Gelsolin-like 5">
    <location>
        <begin position="523"/>
        <end position="564"/>
    </location>
</feature>
<feature type="repeat" description="Gelsolin-like 6">
    <location>
        <begin position="626"/>
        <end position="668"/>
    </location>
</feature>
<feature type="region of interest" description="Actin-severing" evidence="4">
    <location>
        <begin position="1"/>
        <end position="363"/>
    </location>
</feature>
<feature type="region of interest" description="Actin-binding, Ca-sensitive" evidence="4">
    <location>
        <begin position="364"/>
        <end position="715"/>
    </location>
</feature>
<feature type="region of interest" description="Ca(2+)-dependent actin binding" evidence="3">
    <location>
        <begin position="364"/>
        <end position="715"/>
    </location>
</feature>
<feature type="binding site">
    <location>
        <begin position="112"/>
        <end position="119"/>
    </location>
    <ligand>
        <name>a 1,2-diacyl-sn-glycero-3-phospho-(1D-myo-inositol-4,5-bisphosphate)</name>
        <dbReference type="ChEBI" id="CHEBI:58456"/>
    </ligand>
</feature>
<feature type="binding site">
    <location>
        <begin position="138"/>
        <end position="146"/>
    </location>
    <ligand>
        <name>a 1,2-diacyl-sn-glycero-3-phospho-(1D-myo-inositol-4,5-bisphosphate)</name>
        <dbReference type="ChEBI" id="CHEBI:58456"/>
    </ligand>
</feature>
<feature type="binding site" evidence="3">
    <location>
        <position position="538"/>
    </location>
    <ligand>
        <name>Ca(2+)</name>
        <dbReference type="ChEBI" id="CHEBI:29108"/>
        <label>1</label>
    </ligand>
</feature>
<feature type="binding site" evidence="3">
    <location>
        <position position="539"/>
    </location>
    <ligand>
        <name>Ca(2+)</name>
        <dbReference type="ChEBI" id="CHEBI:29108"/>
        <label>1</label>
    </ligand>
</feature>
<feature type="binding site" evidence="3">
    <location>
        <position position="562"/>
    </location>
    <ligand>
        <name>Ca(2+)</name>
        <dbReference type="ChEBI" id="CHEBI:29108"/>
        <label>1</label>
    </ligand>
</feature>
<feature type="binding site" evidence="3">
    <location>
        <position position="643"/>
    </location>
    <ligand>
        <name>Ca(2+)</name>
        <dbReference type="ChEBI" id="CHEBI:29108"/>
        <label>2</label>
    </ligand>
</feature>
<feature type="binding site" evidence="3">
    <location>
        <position position="644"/>
    </location>
    <ligand>
        <name>Ca(2+)</name>
        <dbReference type="ChEBI" id="CHEBI:29108"/>
        <label>2</label>
    </ligand>
</feature>
<feature type="binding site" evidence="3">
    <location>
        <position position="666"/>
    </location>
    <ligand>
        <name>Ca(2+)</name>
        <dbReference type="ChEBI" id="CHEBI:29108"/>
        <label>2</label>
    </ligand>
</feature>
<feature type="modified residue" description="Phosphotyrosine" evidence="2">
    <location>
        <position position="102"/>
    </location>
</feature>
<feature type="modified residue" description="Phosphotyrosine" evidence="2">
    <location>
        <position position="599"/>
    </location>
</feature>
<feature type="sequence conflict" description="In Ref. 2; CAA55227." evidence="10" ref="2">
    <original>RD</original>
    <variation>TH</variation>
    <location>
        <begin position="231"/>
        <end position="232"/>
    </location>
</feature>
<feature type="sequence conflict" description="In Ref. 2; CAA55227." evidence="10" ref="2">
    <original>V</original>
    <variation>L</variation>
    <location>
        <position position="330"/>
    </location>
</feature>
<feature type="sequence conflict" description="In Ref. 2; CAA55227." evidence="10" ref="2">
    <original>AFLTVQLDRSLGG</original>
    <variation>DSRLFSWIDPSGD</variation>
    <location>
        <begin position="454"/>
        <end position="466"/>
    </location>
</feature>
<feature type="sequence conflict" description="In Ref. 2; CAA55227." evidence="10" ref="2">
    <original>ASI</original>
    <variation>DSY</variation>
    <location>
        <begin position="520"/>
        <end position="522"/>
    </location>
</feature>
<protein>
    <recommendedName>
        <fullName evidence="9">Scinderin</fullName>
        <shortName evidence="9">SC</shortName>
    </recommendedName>
    <alternativeName>
        <fullName evidence="8">Adseverin</fullName>
    </alternativeName>
</protein>
<keyword id="KW-0117">Actin capping</keyword>
<keyword id="KW-0009">Actin-binding</keyword>
<keyword id="KW-0106">Calcium</keyword>
<keyword id="KW-0965">Cell junction</keyword>
<keyword id="KW-0966">Cell projection</keyword>
<keyword id="KW-0963">Cytoplasm</keyword>
<keyword id="KW-0206">Cytoskeleton</keyword>
<keyword id="KW-0903">Direct protein sequencing</keyword>
<keyword id="KW-0479">Metal-binding</keyword>
<keyword id="KW-0597">Phosphoprotein</keyword>
<keyword id="KW-1185">Reference proteome</keyword>
<keyword id="KW-0677">Repeat</keyword>
<comment type="function">
    <text evidence="1 2 3 5 6 7">Ca(2+)-dependent actin filament-severing protein that has a regulatory function in exocytosis by affecting the organization of the microfilament network underneath the plasma membrane. In vitro, also has barbed end capping and nucleating activities in the presence of Ca(2+) (PubMed:1651929, PubMed:1847925, PubMed:8780652). Severing activity is inhibited by phosphatidylinositol 4,5-bis-phosphate (PIP2) (PubMed:8780652). Required for megakaryocyte differentiation, maturation, polyploidization and apoptosis with the release of platelet-like particles (By similarity). Plays a role in osteoclastogenesis (OCG) and actin cytoskeletal organization in osteoclasts (By similarity). Regulates chondrocyte proliferation and differentiation (By similarity). Inhibits cell proliferation and tumorigenesis. Signaling is mediated by MAPK, p38 and JNK pathways (By similarity).</text>
</comment>
<comment type="subcellular location">
    <subcellularLocation>
        <location evidence="10">Cytoplasm</location>
        <location evidence="10">Cytoskeleton</location>
    </subcellularLocation>
    <subcellularLocation>
        <location evidence="2">Cell projection</location>
        <location evidence="2">Podosome</location>
    </subcellularLocation>
</comment>
<comment type="tissue specificity">
    <text>In the adrenal gland, expressed in the medulla but, in the cortex, found only in diffuse parts.</text>
</comment>
<comment type="PTM">
    <text>The N-terminus is blocked.</text>
</comment>
<comment type="similarity">
    <text evidence="10">Belongs to the villin/gelsolin family.</text>
</comment>
<reference key="1">
    <citation type="journal article" date="1994" name="J. Biol. Chem.">
        <title>Differential expression of bovine adseverin in adrenal gland revealed by in situ hybridization. Cloning of a cDNA for adseverin.</title>
        <authorList>
            <person name="Nakamura S."/>
            <person name="Sakurai T."/>
            <person name="Nonomura Y."/>
        </authorList>
    </citation>
    <scope>NUCLEOTIDE SEQUENCE [MRNA]</scope>
    <source>
        <tissue>Adrenal medulla</tissue>
    </source>
</reference>
<reference key="2">
    <citation type="journal article" date="1994" name="Can. J. Physiol. Pharmacol.">
        <title>Molecular cloning of bovine chromaffin cell scinderin (Sc) cDNA reveals actin and polyphosphoinositide domains.</title>
        <authorList>
            <person name="Marcu M.G."/>
            <person name="Rodriguez del Castillo A."/>
            <person name="Trifaro J.-M."/>
        </authorList>
    </citation>
    <scope>NUCLEOTIDE SEQUENCE [MRNA]</scope>
    <scope>PARTIAL PROTEIN SEQUENCE</scope>
    <source>
        <tissue>Adrenal medulla</tissue>
    </source>
</reference>
<reference key="3">
    <citation type="journal article" date="1991" name="J. Biol. Chem.">
        <title>The Ca2(+)-dependent actin filament-severing activity of 74-kDa protein (adseverin) resides in its NH2-terminal half.</title>
        <authorList>
            <person name="Sakurai T."/>
            <person name="Kurokawa H."/>
            <person name="Nonomura Y."/>
        </authorList>
    </citation>
    <scope>PROTEIN SEQUENCE OF 364-375</scope>
    <scope>DOMAIN FUNCTION</scope>
    <source>
        <tissue>Adrenal medulla</tissue>
    </source>
</reference>
<reference key="4">
    <citation type="journal article" date="1991" name="J. Biol. Chem.">
        <title>Comparison between the gelsolin and adseverin domain structure.</title>
        <authorList>
            <person name="Sakurai T."/>
            <person name="Kurokawa H."/>
            <person name="Nonomura Y."/>
        </authorList>
    </citation>
    <scope>PROTEIN SEQUENCE OF 129-137 AND 243-247</scope>
    <scope>FUNCTION</scope>
    <source>
        <tissue>Adrenal medulla</tissue>
    </source>
</reference>
<reference key="5">
    <citation type="journal article" date="1996" name="Neuron">
        <title>Recombinant scinderin enhances exocytosis, an effect blocked by two scinderin-derived actin-binding peptides and PIP2.</title>
        <authorList>
            <person name="Zhang L."/>
            <person name="Marcu M.G."/>
            <person name="Nau-Staudt K."/>
            <person name="Trifaro J.M."/>
        </authorList>
    </citation>
    <scope>FUNCTION</scope>
    <scope>TISSUE SPECIFICITY</scope>
    <scope>ACTIN-BINDING</scope>
</reference>